<evidence type="ECO:0000250" key="1"/>
<evidence type="ECO:0000250" key="2">
    <source>
        <dbReference type="UniProtKB" id="Q61286"/>
    </source>
</evidence>
<evidence type="ECO:0000255" key="3">
    <source>
        <dbReference type="PROSITE-ProRule" id="PRU00981"/>
    </source>
</evidence>
<evidence type="ECO:0000256" key="4">
    <source>
        <dbReference type="SAM" id="MobiDB-lite"/>
    </source>
</evidence>
<proteinExistence type="evidence at transcript level"/>
<reference key="1">
    <citation type="journal article" date="1995" name="Gene">
        <title>Identification of non-tissue-specific helix-loop-helix genes in Xenopus laevis.</title>
        <authorList>
            <person name="Shain D.H."/>
            <person name="Zuber M.X."/>
        </authorList>
    </citation>
    <scope>NUCLEOTIDE SEQUENCE [MRNA]</scope>
    <source>
        <tissue>Head</tissue>
    </source>
</reference>
<name>HTF4_XENLA</name>
<protein>
    <recommendedName>
        <fullName>Transcription factor XE1.1</fullName>
    </recommendedName>
</protein>
<sequence>RDDFSSDDMKSDDESSQKEMKSSRGRTSSINEDEDLNPEQKVEREKERRMANNARERLRVRDINEAFKELGRMCQLHLKSEKPQTKLLILHQAVAVILNLEQQVRERNLNPKAACLKRREEEKVSAVSAEPPNTHPGVHPGLTDTTNPMGHM</sequence>
<organism>
    <name type="scientific">Xenopus laevis</name>
    <name type="common">African clawed frog</name>
    <dbReference type="NCBI Taxonomy" id="8355"/>
    <lineage>
        <taxon>Eukaryota</taxon>
        <taxon>Metazoa</taxon>
        <taxon>Chordata</taxon>
        <taxon>Craniata</taxon>
        <taxon>Vertebrata</taxon>
        <taxon>Euteleostomi</taxon>
        <taxon>Amphibia</taxon>
        <taxon>Batrachia</taxon>
        <taxon>Anura</taxon>
        <taxon>Pipoidea</taxon>
        <taxon>Pipidae</taxon>
        <taxon>Xenopodinae</taxon>
        <taxon>Xenopus</taxon>
        <taxon>Xenopus</taxon>
    </lineage>
</organism>
<accession>Q91605</accession>
<keyword id="KW-0217">Developmental protein</keyword>
<keyword id="KW-0221">Differentiation</keyword>
<keyword id="KW-0238">DNA-binding</keyword>
<keyword id="KW-0524">Neurogenesis</keyword>
<keyword id="KW-0539">Nucleus</keyword>
<keyword id="KW-1185">Reference proteome</keyword>
<keyword id="KW-0804">Transcription</keyword>
<keyword id="KW-0805">Transcription regulation</keyword>
<feature type="chain" id="PRO_0000127233" description="Transcription factor XE1.1">
    <location>
        <begin position="1" status="less than"/>
        <end position="152"/>
    </location>
</feature>
<feature type="domain" description="bHLH" evidence="3">
    <location>
        <begin position="47"/>
        <end position="100"/>
    </location>
</feature>
<feature type="region of interest" description="Disordered" evidence="4">
    <location>
        <begin position="1"/>
        <end position="54"/>
    </location>
</feature>
<feature type="region of interest" description="Class A specific domain">
    <location>
        <begin position="102"/>
        <end position="125"/>
    </location>
</feature>
<feature type="region of interest" description="Disordered" evidence="4">
    <location>
        <begin position="123"/>
        <end position="152"/>
    </location>
</feature>
<feature type="compositionally biased region" description="Basic and acidic residues" evidence="4">
    <location>
        <begin position="7"/>
        <end position="22"/>
    </location>
</feature>
<feature type="compositionally biased region" description="Basic and acidic residues" evidence="4">
    <location>
        <begin position="38"/>
        <end position="54"/>
    </location>
</feature>
<feature type="compositionally biased region" description="Polar residues" evidence="4">
    <location>
        <begin position="143"/>
        <end position="152"/>
    </location>
</feature>
<feature type="non-terminal residue">
    <location>
        <position position="1"/>
    </location>
</feature>
<dbReference type="EMBL" id="U25959">
    <property type="protein sequence ID" value="AAA92047.1"/>
    <property type="molecule type" value="mRNA"/>
</dbReference>
<dbReference type="SMR" id="Q91605"/>
<dbReference type="AGR" id="Xenbase:XB-GENE-5799717"/>
<dbReference type="Xenbase" id="XB-GENE-5799717">
    <property type="gene designation" value="tcf12.L"/>
</dbReference>
<dbReference type="Proteomes" id="UP000186698">
    <property type="component" value="Unplaced"/>
</dbReference>
<dbReference type="GO" id="GO:0000785">
    <property type="term" value="C:chromatin"/>
    <property type="evidence" value="ECO:0007669"/>
    <property type="project" value="TreeGrafter"/>
</dbReference>
<dbReference type="GO" id="GO:0005634">
    <property type="term" value="C:nucleus"/>
    <property type="evidence" value="ECO:0007669"/>
    <property type="project" value="UniProtKB-SubCell"/>
</dbReference>
<dbReference type="GO" id="GO:0005667">
    <property type="term" value="C:transcription regulator complex"/>
    <property type="evidence" value="ECO:0007669"/>
    <property type="project" value="TreeGrafter"/>
</dbReference>
<dbReference type="GO" id="GO:0000981">
    <property type="term" value="F:DNA-binding transcription factor activity, RNA polymerase II-specific"/>
    <property type="evidence" value="ECO:0007669"/>
    <property type="project" value="TreeGrafter"/>
</dbReference>
<dbReference type="GO" id="GO:0070888">
    <property type="term" value="F:E-box binding"/>
    <property type="evidence" value="ECO:0000250"/>
    <property type="project" value="UniProtKB"/>
</dbReference>
<dbReference type="GO" id="GO:0046982">
    <property type="term" value="F:protein heterodimerization activity"/>
    <property type="evidence" value="ECO:0000250"/>
    <property type="project" value="UniProtKB"/>
</dbReference>
<dbReference type="GO" id="GO:0030154">
    <property type="term" value="P:cell differentiation"/>
    <property type="evidence" value="ECO:0007669"/>
    <property type="project" value="UniProtKB-KW"/>
</dbReference>
<dbReference type="GO" id="GO:0007399">
    <property type="term" value="P:nervous system development"/>
    <property type="evidence" value="ECO:0007669"/>
    <property type="project" value="UniProtKB-KW"/>
</dbReference>
<dbReference type="GO" id="GO:0045666">
    <property type="term" value="P:positive regulation of neuron differentiation"/>
    <property type="evidence" value="ECO:0000250"/>
    <property type="project" value="UniProtKB"/>
</dbReference>
<dbReference type="CDD" id="cd18946">
    <property type="entry name" value="bHLH_E-protein_TCF12_HEB"/>
    <property type="match status" value="1"/>
</dbReference>
<dbReference type="FunFam" id="4.10.280.10:FF:000001">
    <property type="entry name" value="Putative transcription factor 12"/>
    <property type="match status" value="1"/>
</dbReference>
<dbReference type="Gene3D" id="4.10.280.10">
    <property type="entry name" value="Helix-loop-helix DNA-binding domain"/>
    <property type="match status" value="1"/>
</dbReference>
<dbReference type="InterPro" id="IPR011598">
    <property type="entry name" value="bHLH_dom"/>
</dbReference>
<dbReference type="InterPro" id="IPR036638">
    <property type="entry name" value="HLH_DNA-bd_sf"/>
</dbReference>
<dbReference type="InterPro" id="IPR051098">
    <property type="entry name" value="NeuroDiff_E-box_TFs"/>
</dbReference>
<dbReference type="PANTHER" id="PTHR11793">
    <property type="entry name" value="BASIC HELIX-LOOP-HELIX TRANSCRIPTION FACTOR"/>
    <property type="match status" value="1"/>
</dbReference>
<dbReference type="PANTHER" id="PTHR11793:SF11">
    <property type="entry name" value="TRANSCRIPTION FACTOR 12"/>
    <property type="match status" value="1"/>
</dbReference>
<dbReference type="Pfam" id="PF00010">
    <property type="entry name" value="HLH"/>
    <property type="match status" value="1"/>
</dbReference>
<dbReference type="SMART" id="SM00353">
    <property type="entry name" value="HLH"/>
    <property type="match status" value="1"/>
</dbReference>
<dbReference type="SUPFAM" id="SSF47459">
    <property type="entry name" value="HLH, helix-loop-helix DNA-binding domain"/>
    <property type="match status" value="1"/>
</dbReference>
<dbReference type="PROSITE" id="PS50888">
    <property type="entry name" value="BHLH"/>
    <property type="match status" value="1"/>
</dbReference>
<comment type="function">
    <text evidence="2">Transcriptional regulator. Involved in the initiation of neuronal differentiation. Activates transcription by binding to the E box-containing promoter (By similarity).</text>
</comment>
<comment type="subunit">
    <text evidence="1">Efficient DNA binding requires dimerization with another bHLH protein. Forms homo- or heterooligomers with myogenin, E12 and ITF2 proteins (By similarity).</text>
</comment>
<comment type="subcellular location">
    <subcellularLocation>
        <location>Nucleus</location>
    </subcellularLocation>
</comment>